<sequence>MKHIRNFSIIAHIDHGKSTLADRLIERCGGLADRQMQAQVLDSMDLEKERGITIKAQTAALQYQARDGQVYQLNLIDTPGHVDFSYEVSRSLSACEGALLVVDASQGVEAQTVANCYTALELGVEVVPVLNKMDLPNADPDNAKAEIEDVIGIDATDAIPCSAKTGMGIDDILQAIVAKVPAPRGQADGPLRAMIIDSWFDSYVGVVMLVRVVDGRLLKGERIKMMASGAVYNADGLGVFTPANEPRDALAAGQVGYVIAGIKELQAAKVGDTITLEKKLPNNAGPAAQALPGFKEIQPQVFAGLYPTEASAYDSLRDALEKLKLNDASLHYEPEVSQALGFGFRCGFLGLLHMEIVQERLEREFDQDLITTAPSVVYQVVKADGQVLMVENPSKMPDQGRLSEIREPIVTVHLYMPQDYVGPVMTLANQKRGVQMNMAYHGRQVMLTYDMPLGEIVLDFFDKLKSVSRGYASMDYTFKEYRASDVVKVDILLNGDKVDALSIIVHRSQSQHRGRAVVAKMREIISRQMYDVAIQAAIGANIIARETIKALRKNVLAKCYGGDITRKRKLLEKQKAGKKRMKQIGSVEVPQEAFLAILQVQE</sequence>
<protein>
    <recommendedName>
        <fullName evidence="1">Elongation factor 4</fullName>
        <shortName evidence="1">EF-4</shortName>
        <ecNumber evidence="1">3.6.5.n1</ecNumber>
    </recommendedName>
    <alternativeName>
        <fullName evidence="1">Ribosomal back-translocase LepA</fullName>
    </alternativeName>
</protein>
<comment type="function">
    <text evidence="1">Required for accurate and efficient protein synthesis under certain stress conditions. May act as a fidelity factor of the translation reaction, by catalyzing a one-codon backward translocation of tRNAs on improperly translocated ribosomes. Back-translocation proceeds from a post-translocation (POST) complex to a pre-translocation (PRE) complex, thus giving elongation factor G a second chance to translocate the tRNAs correctly. Binds to ribosomes in a GTP-dependent manner.</text>
</comment>
<comment type="catalytic activity">
    <reaction evidence="1">
        <text>GTP + H2O = GDP + phosphate + H(+)</text>
        <dbReference type="Rhea" id="RHEA:19669"/>
        <dbReference type="ChEBI" id="CHEBI:15377"/>
        <dbReference type="ChEBI" id="CHEBI:15378"/>
        <dbReference type="ChEBI" id="CHEBI:37565"/>
        <dbReference type="ChEBI" id="CHEBI:43474"/>
        <dbReference type="ChEBI" id="CHEBI:58189"/>
        <dbReference type="EC" id="3.6.5.n1"/>
    </reaction>
</comment>
<comment type="subcellular location">
    <subcellularLocation>
        <location evidence="1">Cell inner membrane</location>
        <topology evidence="1">Peripheral membrane protein</topology>
        <orientation evidence="1">Cytoplasmic side</orientation>
    </subcellularLocation>
</comment>
<comment type="similarity">
    <text evidence="1">Belongs to the TRAFAC class translation factor GTPase superfamily. Classic translation factor GTPase family. LepA subfamily.</text>
</comment>
<name>LEPA_VEREI</name>
<proteinExistence type="inferred from homology"/>
<organism>
    <name type="scientific">Verminephrobacter eiseniae (strain EF01-2)</name>
    <dbReference type="NCBI Taxonomy" id="391735"/>
    <lineage>
        <taxon>Bacteria</taxon>
        <taxon>Pseudomonadati</taxon>
        <taxon>Pseudomonadota</taxon>
        <taxon>Betaproteobacteria</taxon>
        <taxon>Burkholderiales</taxon>
        <taxon>Comamonadaceae</taxon>
        <taxon>Verminephrobacter</taxon>
    </lineage>
</organism>
<feature type="chain" id="PRO_1000032067" description="Elongation factor 4">
    <location>
        <begin position="1"/>
        <end position="602"/>
    </location>
</feature>
<feature type="domain" description="tr-type G">
    <location>
        <begin position="2"/>
        <end position="184"/>
    </location>
</feature>
<feature type="binding site" evidence="1">
    <location>
        <begin position="14"/>
        <end position="19"/>
    </location>
    <ligand>
        <name>GTP</name>
        <dbReference type="ChEBI" id="CHEBI:37565"/>
    </ligand>
</feature>
<feature type="binding site" evidence="1">
    <location>
        <begin position="131"/>
        <end position="134"/>
    </location>
    <ligand>
        <name>GTP</name>
        <dbReference type="ChEBI" id="CHEBI:37565"/>
    </ligand>
</feature>
<evidence type="ECO:0000255" key="1">
    <source>
        <dbReference type="HAMAP-Rule" id="MF_00071"/>
    </source>
</evidence>
<gene>
    <name evidence="1" type="primary">lepA</name>
    <name type="ordered locus">Veis_3241</name>
</gene>
<keyword id="KW-0997">Cell inner membrane</keyword>
<keyword id="KW-1003">Cell membrane</keyword>
<keyword id="KW-0342">GTP-binding</keyword>
<keyword id="KW-0378">Hydrolase</keyword>
<keyword id="KW-0472">Membrane</keyword>
<keyword id="KW-0547">Nucleotide-binding</keyword>
<keyword id="KW-0648">Protein biosynthesis</keyword>
<keyword id="KW-1185">Reference proteome</keyword>
<reference key="1">
    <citation type="submission" date="2006-12" db="EMBL/GenBank/DDBJ databases">
        <title>Complete sequence of chromosome 1 of Verminephrobacter eiseniae EF01-2.</title>
        <authorList>
            <person name="Copeland A."/>
            <person name="Lucas S."/>
            <person name="Lapidus A."/>
            <person name="Barry K."/>
            <person name="Detter J.C."/>
            <person name="Glavina del Rio T."/>
            <person name="Dalin E."/>
            <person name="Tice H."/>
            <person name="Pitluck S."/>
            <person name="Chertkov O."/>
            <person name="Brettin T."/>
            <person name="Bruce D."/>
            <person name="Han C."/>
            <person name="Tapia R."/>
            <person name="Gilna P."/>
            <person name="Schmutz J."/>
            <person name="Larimer F."/>
            <person name="Land M."/>
            <person name="Hauser L."/>
            <person name="Kyrpides N."/>
            <person name="Kim E."/>
            <person name="Stahl D."/>
            <person name="Richardson P."/>
        </authorList>
    </citation>
    <scope>NUCLEOTIDE SEQUENCE [LARGE SCALE GENOMIC DNA]</scope>
    <source>
        <strain>EF01-2</strain>
    </source>
</reference>
<accession>A1WMW4</accession>
<dbReference type="EC" id="3.6.5.n1" evidence="1"/>
<dbReference type="EMBL" id="CP000542">
    <property type="protein sequence ID" value="ABM58971.1"/>
    <property type="molecule type" value="Genomic_DNA"/>
</dbReference>
<dbReference type="RefSeq" id="WP_011810963.1">
    <property type="nucleotide sequence ID" value="NC_008786.1"/>
</dbReference>
<dbReference type="SMR" id="A1WMW4"/>
<dbReference type="STRING" id="391735.Veis_3241"/>
<dbReference type="GeneID" id="76461691"/>
<dbReference type="KEGG" id="vei:Veis_3241"/>
<dbReference type="eggNOG" id="COG0481">
    <property type="taxonomic scope" value="Bacteria"/>
</dbReference>
<dbReference type="HOGENOM" id="CLU_009995_3_3_4"/>
<dbReference type="OrthoDB" id="9801472at2"/>
<dbReference type="Proteomes" id="UP000000374">
    <property type="component" value="Chromosome"/>
</dbReference>
<dbReference type="GO" id="GO:0005886">
    <property type="term" value="C:plasma membrane"/>
    <property type="evidence" value="ECO:0007669"/>
    <property type="project" value="UniProtKB-SubCell"/>
</dbReference>
<dbReference type="GO" id="GO:0005525">
    <property type="term" value="F:GTP binding"/>
    <property type="evidence" value="ECO:0007669"/>
    <property type="project" value="UniProtKB-UniRule"/>
</dbReference>
<dbReference type="GO" id="GO:0003924">
    <property type="term" value="F:GTPase activity"/>
    <property type="evidence" value="ECO:0007669"/>
    <property type="project" value="UniProtKB-UniRule"/>
</dbReference>
<dbReference type="GO" id="GO:0097216">
    <property type="term" value="F:guanosine tetraphosphate binding"/>
    <property type="evidence" value="ECO:0007669"/>
    <property type="project" value="UniProtKB-ARBA"/>
</dbReference>
<dbReference type="GO" id="GO:0043022">
    <property type="term" value="F:ribosome binding"/>
    <property type="evidence" value="ECO:0007669"/>
    <property type="project" value="UniProtKB-UniRule"/>
</dbReference>
<dbReference type="GO" id="GO:0003746">
    <property type="term" value="F:translation elongation factor activity"/>
    <property type="evidence" value="ECO:0007669"/>
    <property type="project" value="UniProtKB-UniRule"/>
</dbReference>
<dbReference type="GO" id="GO:0045727">
    <property type="term" value="P:positive regulation of translation"/>
    <property type="evidence" value="ECO:0007669"/>
    <property type="project" value="UniProtKB-UniRule"/>
</dbReference>
<dbReference type="CDD" id="cd16260">
    <property type="entry name" value="EF4_III"/>
    <property type="match status" value="1"/>
</dbReference>
<dbReference type="CDD" id="cd01890">
    <property type="entry name" value="LepA"/>
    <property type="match status" value="1"/>
</dbReference>
<dbReference type="CDD" id="cd03709">
    <property type="entry name" value="lepA_C"/>
    <property type="match status" value="1"/>
</dbReference>
<dbReference type="FunFam" id="3.40.50.300:FF:000078">
    <property type="entry name" value="Elongation factor 4"/>
    <property type="match status" value="1"/>
</dbReference>
<dbReference type="FunFam" id="2.40.30.10:FF:000015">
    <property type="entry name" value="Translation factor GUF1, mitochondrial"/>
    <property type="match status" value="1"/>
</dbReference>
<dbReference type="FunFam" id="3.30.70.240:FF:000007">
    <property type="entry name" value="Translation factor GUF1, mitochondrial"/>
    <property type="match status" value="1"/>
</dbReference>
<dbReference type="FunFam" id="3.30.70.2570:FF:000001">
    <property type="entry name" value="Translation factor GUF1, mitochondrial"/>
    <property type="match status" value="1"/>
</dbReference>
<dbReference type="FunFam" id="3.30.70.870:FF:000004">
    <property type="entry name" value="Translation factor GUF1, mitochondrial"/>
    <property type="match status" value="1"/>
</dbReference>
<dbReference type="Gene3D" id="3.30.70.240">
    <property type="match status" value="1"/>
</dbReference>
<dbReference type="Gene3D" id="3.30.70.2570">
    <property type="entry name" value="Elongation factor 4, C-terminal domain"/>
    <property type="match status" value="1"/>
</dbReference>
<dbReference type="Gene3D" id="3.30.70.870">
    <property type="entry name" value="Elongation Factor G (Translational Gtpase), domain 3"/>
    <property type="match status" value="1"/>
</dbReference>
<dbReference type="Gene3D" id="3.40.50.300">
    <property type="entry name" value="P-loop containing nucleotide triphosphate hydrolases"/>
    <property type="match status" value="1"/>
</dbReference>
<dbReference type="Gene3D" id="2.40.30.10">
    <property type="entry name" value="Translation factors"/>
    <property type="match status" value="1"/>
</dbReference>
<dbReference type="HAMAP" id="MF_00071">
    <property type="entry name" value="LepA"/>
    <property type="match status" value="1"/>
</dbReference>
<dbReference type="InterPro" id="IPR006297">
    <property type="entry name" value="EF-4"/>
</dbReference>
<dbReference type="InterPro" id="IPR035647">
    <property type="entry name" value="EFG_III/V"/>
</dbReference>
<dbReference type="InterPro" id="IPR000640">
    <property type="entry name" value="EFG_V-like"/>
</dbReference>
<dbReference type="InterPro" id="IPR004161">
    <property type="entry name" value="EFTu-like_2"/>
</dbReference>
<dbReference type="InterPro" id="IPR031157">
    <property type="entry name" value="G_TR_CS"/>
</dbReference>
<dbReference type="InterPro" id="IPR038363">
    <property type="entry name" value="LepA_C_sf"/>
</dbReference>
<dbReference type="InterPro" id="IPR013842">
    <property type="entry name" value="LepA_CTD"/>
</dbReference>
<dbReference type="InterPro" id="IPR035654">
    <property type="entry name" value="LepA_IV"/>
</dbReference>
<dbReference type="InterPro" id="IPR027417">
    <property type="entry name" value="P-loop_NTPase"/>
</dbReference>
<dbReference type="InterPro" id="IPR005225">
    <property type="entry name" value="Small_GTP-bd"/>
</dbReference>
<dbReference type="InterPro" id="IPR000795">
    <property type="entry name" value="T_Tr_GTP-bd_dom"/>
</dbReference>
<dbReference type="InterPro" id="IPR009000">
    <property type="entry name" value="Transl_B-barrel_sf"/>
</dbReference>
<dbReference type="NCBIfam" id="TIGR01393">
    <property type="entry name" value="lepA"/>
    <property type="match status" value="1"/>
</dbReference>
<dbReference type="NCBIfam" id="TIGR00231">
    <property type="entry name" value="small_GTP"/>
    <property type="match status" value="1"/>
</dbReference>
<dbReference type="PANTHER" id="PTHR43512:SF4">
    <property type="entry name" value="TRANSLATION FACTOR GUF1 HOMOLOG, CHLOROPLASTIC"/>
    <property type="match status" value="1"/>
</dbReference>
<dbReference type="PANTHER" id="PTHR43512">
    <property type="entry name" value="TRANSLATION FACTOR GUF1-RELATED"/>
    <property type="match status" value="1"/>
</dbReference>
<dbReference type="Pfam" id="PF00679">
    <property type="entry name" value="EFG_C"/>
    <property type="match status" value="1"/>
</dbReference>
<dbReference type="Pfam" id="PF00009">
    <property type="entry name" value="GTP_EFTU"/>
    <property type="match status" value="1"/>
</dbReference>
<dbReference type="Pfam" id="PF03144">
    <property type="entry name" value="GTP_EFTU_D2"/>
    <property type="match status" value="1"/>
</dbReference>
<dbReference type="Pfam" id="PF06421">
    <property type="entry name" value="LepA_C"/>
    <property type="match status" value="1"/>
</dbReference>
<dbReference type="PRINTS" id="PR00315">
    <property type="entry name" value="ELONGATNFCT"/>
</dbReference>
<dbReference type="SMART" id="SM00838">
    <property type="entry name" value="EFG_C"/>
    <property type="match status" value="1"/>
</dbReference>
<dbReference type="SUPFAM" id="SSF54980">
    <property type="entry name" value="EF-G C-terminal domain-like"/>
    <property type="match status" value="2"/>
</dbReference>
<dbReference type="SUPFAM" id="SSF52540">
    <property type="entry name" value="P-loop containing nucleoside triphosphate hydrolases"/>
    <property type="match status" value="1"/>
</dbReference>
<dbReference type="SUPFAM" id="SSF50447">
    <property type="entry name" value="Translation proteins"/>
    <property type="match status" value="1"/>
</dbReference>
<dbReference type="PROSITE" id="PS00301">
    <property type="entry name" value="G_TR_1"/>
    <property type="match status" value="1"/>
</dbReference>
<dbReference type="PROSITE" id="PS51722">
    <property type="entry name" value="G_TR_2"/>
    <property type="match status" value="1"/>
</dbReference>